<sequence>MASKGPSASASTENSSAGGPSGSSNGTGESGGQDSTFECNICLDTAKDAVISLCGHLFCWPCLHQWLETRPNRQVCPVCKAGISRDKVIPLYGRGSTGQQDPREKTPPRPQGQRPEPENRGGFQGFGFGDGGFQMSFGIGAFPFGIFATAFNINDGRPPPAVPGTPQYVDEQFLSRLFLFVALVIMFWLLIA</sequence>
<proteinExistence type="evidence at transcript level"/>
<organism>
    <name type="scientific">Rattus norvegicus</name>
    <name type="common">Rat</name>
    <dbReference type="NCBI Taxonomy" id="10116"/>
    <lineage>
        <taxon>Eukaryota</taxon>
        <taxon>Metazoa</taxon>
        <taxon>Chordata</taxon>
        <taxon>Craniata</taxon>
        <taxon>Vertebrata</taxon>
        <taxon>Euteleostomi</taxon>
        <taxon>Mammalia</taxon>
        <taxon>Eutheria</taxon>
        <taxon>Euarchontoglires</taxon>
        <taxon>Glires</taxon>
        <taxon>Rodentia</taxon>
        <taxon>Myomorpha</taxon>
        <taxon>Muroidea</taxon>
        <taxon>Muridae</taxon>
        <taxon>Murinae</taxon>
        <taxon>Rattus</taxon>
    </lineage>
</organism>
<name>RN185_RAT</name>
<feature type="chain" id="PRO_0000247523" description="E3 ubiquitin-protein ligase RNF185">
    <location>
        <begin position="1"/>
        <end position="192"/>
    </location>
</feature>
<feature type="topological domain" description="Cytoplasmic">
    <location>
        <begin position="1"/>
        <end position="130"/>
    </location>
</feature>
<feature type="transmembrane region" description="Helical" evidence="2">
    <location>
        <begin position="131"/>
        <end position="151"/>
    </location>
</feature>
<feature type="topological domain" description="Mitochondrial intermembrane">
    <location>
        <begin position="152"/>
        <end position="171"/>
    </location>
</feature>
<feature type="transmembrane region" description="Helical" evidence="2">
    <location>
        <begin position="172"/>
        <end position="192"/>
    </location>
</feature>
<feature type="zinc finger region" description="RING-type" evidence="3">
    <location>
        <begin position="39"/>
        <end position="80"/>
    </location>
</feature>
<feature type="region of interest" description="Disordered" evidence="4">
    <location>
        <begin position="1"/>
        <end position="30"/>
    </location>
</feature>
<feature type="region of interest" description="Required for ubiquitin ligase activity and protection against ER stress-induced cell death" evidence="1">
    <location>
        <begin position="29"/>
        <end position="80"/>
    </location>
</feature>
<feature type="region of interest" description="Disordered" evidence="4">
    <location>
        <begin position="90"/>
        <end position="123"/>
    </location>
</feature>
<feature type="compositionally biased region" description="Polar residues" evidence="4">
    <location>
        <begin position="1"/>
        <end position="14"/>
    </location>
</feature>
<feature type="compositionally biased region" description="Low complexity" evidence="4">
    <location>
        <begin position="15"/>
        <end position="27"/>
    </location>
</feature>
<dbReference type="EC" id="2.3.2.27" evidence="1"/>
<dbReference type="EMBL" id="BC092655">
    <property type="protein sequence ID" value="AAH92655.1"/>
    <property type="molecule type" value="mRNA"/>
</dbReference>
<dbReference type="RefSeq" id="NP_001019442.1">
    <property type="nucleotide sequence ID" value="NM_001024271.1"/>
</dbReference>
<dbReference type="RefSeq" id="XP_006251395.1">
    <property type="nucleotide sequence ID" value="XM_006251333.2"/>
</dbReference>
<dbReference type="RefSeq" id="XP_017454807.1">
    <property type="nucleotide sequence ID" value="XM_017599318.3"/>
</dbReference>
<dbReference type="RefSeq" id="XP_063129460.1">
    <property type="nucleotide sequence ID" value="XM_063273390.1"/>
</dbReference>
<dbReference type="SMR" id="Q568Y3"/>
<dbReference type="FunCoup" id="Q568Y3">
    <property type="interactions" value="1153"/>
</dbReference>
<dbReference type="STRING" id="10116.ENSRNOP00000026134"/>
<dbReference type="PhosphoSitePlus" id="Q568Y3"/>
<dbReference type="PaxDb" id="10116-ENSRNOP00000026134"/>
<dbReference type="Ensembl" id="ENSRNOT00000026134.6">
    <property type="protein sequence ID" value="ENSRNOP00000026134.5"/>
    <property type="gene ID" value="ENSRNOG00000019325.6"/>
</dbReference>
<dbReference type="GeneID" id="360967"/>
<dbReference type="KEGG" id="rno:360967"/>
<dbReference type="UCSC" id="RGD:1564777">
    <property type="organism name" value="rat"/>
</dbReference>
<dbReference type="AGR" id="RGD:1564777"/>
<dbReference type="CTD" id="91445"/>
<dbReference type="RGD" id="1564777">
    <property type="gene designation" value="Rnf185"/>
</dbReference>
<dbReference type="eggNOG" id="KOG0823">
    <property type="taxonomic scope" value="Eukaryota"/>
</dbReference>
<dbReference type="GeneTree" id="ENSGT00390000014107"/>
<dbReference type="HOGENOM" id="CLU_055198_2_2_1"/>
<dbReference type="InParanoid" id="Q568Y3"/>
<dbReference type="OMA" id="RPNRQTC"/>
<dbReference type="OrthoDB" id="87584at9989"/>
<dbReference type="PhylomeDB" id="Q568Y3"/>
<dbReference type="TreeFam" id="TF317334"/>
<dbReference type="Reactome" id="R-RNO-382556">
    <property type="pathway name" value="ABC-family proteins mediated transport"/>
</dbReference>
<dbReference type="UniPathway" id="UPA00143"/>
<dbReference type="PRO" id="PR:Q568Y3"/>
<dbReference type="Proteomes" id="UP000002494">
    <property type="component" value="Chromosome 14"/>
</dbReference>
<dbReference type="Bgee" id="ENSRNOG00000019325">
    <property type="expression patterns" value="Expressed in adult mammalian kidney and 19 other cell types or tissues"/>
</dbReference>
<dbReference type="GO" id="GO:0005783">
    <property type="term" value="C:endoplasmic reticulum"/>
    <property type="evidence" value="ECO:0000250"/>
    <property type="project" value="UniProtKB"/>
</dbReference>
<dbReference type="GO" id="GO:0005789">
    <property type="term" value="C:endoplasmic reticulum membrane"/>
    <property type="evidence" value="ECO:0007669"/>
    <property type="project" value="UniProtKB-SubCell"/>
</dbReference>
<dbReference type="GO" id="GO:0005741">
    <property type="term" value="C:mitochondrial outer membrane"/>
    <property type="evidence" value="ECO:0007669"/>
    <property type="project" value="UniProtKB-SubCell"/>
</dbReference>
<dbReference type="GO" id="GO:0044877">
    <property type="term" value="F:protein-containing complex binding"/>
    <property type="evidence" value="ECO:0000266"/>
    <property type="project" value="RGD"/>
</dbReference>
<dbReference type="GO" id="GO:0043130">
    <property type="term" value="F:ubiquitin binding"/>
    <property type="evidence" value="ECO:0000250"/>
    <property type="project" value="UniProtKB"/>
</dbReference>
<dbReference type="GO" id="GO:0061630">
    <property type="term" value="F:ubiquitin protein ligase activity"/>
    <property type="evidence" value="ECO:0000250"/>
    <property type="project" value="UniProtKB"/>
</dbReference>
<dbReference type="GO" id="GO:0044390">
    <property type="term" value="F:ubiquitin-like protein conjugating enzyme binding"/>
    <property type="evidence" value="ECO:0000266"/>
    <property type="project" value="RGD"/>
</dbReference>
<dbReference type="GO" id="GO:0008270">
    <property type="term" value="F:zinc ion binding"/>
    <property type="evidence" value="ECO:0007669"/>
    <property type="project" value="UniProtKB-KW"/>
</dbReference>
<dbReference type="GO" id="GO:0006914">
    <property type="term" value="P:autophagy"/>
    <property type="evidence" value="ECO:0007669"/>
    <property type="project" value="UniProtKB-KW"/>
</dbReference>
<dbReference type="GO" id="GO:0051607">
    <property type="term" value="P:defense response to virus"/>
    <property type="evidence" value="ECO:0000250"/>
    <property type="project" value="UniProtKB"/>
</dbReference>
<dbReference type="GO" id="GO:0036503">
    <property type="term" value="P:ERAD pathway"/>
    <property type="evidence" value="ECO:0000266"/>
    <property type="project" value="RGD"/>
</dbReference>
<dbReference type="GO" id="GO:0045087">
    <property type="term" value="P:innate immune response"/>
    <property type="evidence" value="ECO:0007669"/>
    <property type="project" value="UniProtKB-KW"/>
</dbReference>
<dbReference type="GO" id="GO:1904294">
    <property type="term" value="P:positive regulation of ERAD pathway"/>
    <property type="evidence" value="ECO:0000250"/>
    <property type="project" value="UniProtKB"/>
</dbReference>
<dbReference type="GO" id="GO:0045089">
    <property type="term" value="P:positive regulation of innate immune response"/>
    <property type="evidence" value="ECO:0000266"/>
    <property type="project" value="RGD"/>
</dbReference>
<dbReference type="GO" id="GO:0060340">
    <property type="term" value="P:positive regulation of type I interferon-mediated signaling pathway"/>
    <property type="evidence" value="ECO:0000250"/>
    <property type="project" value="UniProtKB"/>
</dbReference>
<dbReference type="GO" id="GO:0051865">
    <property type="term" value="P:protein autoubiquitination"/>
    <property type="evidence" value="ECO:0000250"/>
    <property type="project" value="UniProtKB"/>
</dbReference>
<dbReference type="GO" id="GO:0044314">
    <property type="term" value="P:protein K27-linked ubiquitination"/>
    <property type="evidence" value="ECO:0000250"/>
    <property type="project" value="UniProtKB"/>
</dbReference>
<dbReference type="GO" id="GO:0006511">
    <property type="term" value="P:ubiquitin-dependent protein catabolic process"/>
    <property type="evidence" value="ECO:0000266"/>
    <property type="project" value="RGD"/>
</dbReference>
<dbReference type="CDD" id="cd16744">
    <property type="entry name" value="RING-HC_RNF185"/>
    <property type="match status" value="1"/>
</dbReference>
<dbReference type="FunFam" id="3.30.40.10:FF:000062">
    <property type="entry name" value="E3 ubiquitin-protein ligase RNF185"/>
    <property type="match status" value="1"/>
</dbReference>
<dbReference type="Gene3D" id="3.30.40.10">
    <property type="entry name" value="Zinc/RING finger domain, C3HC4 (zinc finger)"/>
    <property type="match status" value="1"/>
</dbReference>
<dbReference type="InterPro" id="IPR045103">
    <property type="entry name" value="RNF5/RNF185-like"/>
</dbReference>
<dbReference type="InterPro" id="IPR018957">
    <property type="entry name" value="Znf_C3HC4_RING-type"/>
</dbReference>
<dbReference type="InterPro" id="IPR001841">
    <property type="entry name" value="Znf_RING"/>
</dbReference>
<dbReference type="InterPro" id="IPR013083">
    <property type="entry name" value="Znf_RING/FYVE/PHD"/>
</dbReference>
<dbReference type="InterPro" id="IPR017907">
    <property type="entry name" value="Znf_RING_CS"/>
</dbReference>
<dbReference type="PANTHER" id="PTHR12313">
    <property type="entry name" value="E3 UBIQUITIN-PROTEIN LIGASE RNF5-RELATED"/>
    <property type="match status" value="1"/>
</dbReference>
<dbReference type="Pfam" id="PF00097">
    <property type="entry name" value="zf-C3HC4"/>
    <property type="match status" value="1"/>
</dbReference>
<dbReference type="SMART" id="SM00184">
    <property type="entry name" value="RING"/>
    <property type="match status" value="1"/>
</dbReference>
<dbReference type="SUPFAM" id="SSF57850">
    <property type="entry name" value="RING/U-box"/>
    <property type="match status" value="1"/>
</dbReference>
<dbReference type="PROSITE" id="PS00518">
    <property type="entry name" value="ZF_RING_1"/>
    <property type="match status" value="1"/>
</dbReference>
<dbReference type="PROSITE" id="PS50089">
    <property type="entry name" value="ZF_RING_2"/>
    <property type="match status" value="1"/>
</dbReference>
<gene>
    <name type="primary">Rnf185</name>
</gene>
<reference key="1">
    <citation type="journal article" date="2004" name="Genome Res.">
        <title>The status, quality, and expansion of the NIH full-length cDNA project: the Mammalian Gene Collection (MGC).</title>
        <authorList>
            <consortium name="The MGC Project Team"/>
        </authorList>
    </citation>
    <scope>NUCLEOTIDE SEQUENCE [LARGE SCALE MRNA]</scope>
    <source>
        <tissue>Brain</tissue>
    </source>
</reference>
<evidence type="ECO:0000250" key="1">
    <source>
        <dbReference type="UniProtKB" id="Q96GF1"/>
    </source>
</evidence>
<evidence type="ECO:0000255" key="2"/>
<evidence type="ECO:0000255" key="3">
    <source>
        <dbReference type="PROSITE-ProRule" id="PRU00175"/>
    </source>
</evidence>
<evidence type="ECO:0000256" key="4">
    <source>
        <dbReference type="SAM" id="MobiDB-lite"/>
    </source>
</evidence>
<protein>
    <recommendedName>
        <fullName>E3 ubiquitin-protein ligase RNF185</fullName>
        <ecNumber evidence="1">2.3.2.27</ecNumber>
    </recommendedName>
    <alternativeName>
        <fullName>RING finger protein 185</fullName>
    </alternativeName>
</protein>
<comment type="function">
    <text evidence="1">E3 ubiquitin-protein ligase that regulates selective mitochondrial autophagy by mediating 'Lys-63'-linked polyubiquitination of BNIP1. Acts in the endoplasmic reticulum (ER)-associated degradation (ERAD) pathway, which targets misfolded proteins that accumulate in the endoplasmic reticulum (ER) for ubiquitination and subsequent proteasome-mediated degradation. Protects cells from ER stress-induced apoptosis. Responsible for the cotranslational ubiquitination and degradation of CFTR in the ERAD pathway. Also acts as a regulator of the innate antiviral response by catalyzing 'Lys-27'-linked polyubiquitination of CGAS, thereby promoting CGAS cyclic GMP-AMP synthase activity. Preferentially associates with the E2 enzymes UBE2J1 and UBE2J2.</text>
</comment>
<comment type="catalytic activity">
    <reaction evidence="1">
        <text>S-ubiquitinyl-[E2 ubiquitin-conjugating enzyme]-L-cysteine + [acceptor protein]-L-lysine = [E2 ubiquitin-conjugating enzyme]-L-cysteine + N(6)-ubiquitinyl-[acceptor protein]-L-lysine.</text>
        <dbReference type="EC" id="2.3.2.27"/>
    </reaction>
</comment>
<comment type="pathway">
    <text evidence="1">Protein modification; protein ubiquitination.</text>
</comment>
<comment type="subunit">
    <text evidence="1">Interacts with ATG5 and BNIP1.</text>
</comment>
<comment type="subcellular location">
    <subcellularLocation>
        <location evidence="1">Mitochondrion outer membrane</location>
        <topology evidence="1">Multi-pass membrane protein</topology>
    </subcellularLocation>
    <subcellularLocation>
        <location evidence="1">Endoplasmic reticulum membrane</location>
        <topology evidence="1">Multi-pass membrane protein</topology>
    </subcellularLocation>
</comment>
<comment type="domain">
    <text evidence="1">The RING-type zinc finger domain is responsible for E3 ubiquitin ligase activity.</text>
</comment>
<accession>Q568Y3</accession>
<keyword id="KW-0072">Autophagy</keyword>
<keyword id="KW-0256">Endoplasmic reticulum</keyword>
<keyword id="KW-0391">Immunity</keyword>
<keyword id="KW-0399">Innate immunity</keyword>
<keyword id="KW-0472">Membrane</keyword>
<keyword id="KW-0479">Metal-binding</keyword>
<keyword id="KW-0496">Mitochondrion</keyword>
<keyword id="KW-1000">Mitochondrion outer membrane</keyword>
<keyword id="KW-1185">Reference proteome</keyword>
<keyword id="KW-0808">Transferase</keyword>
<keyword id="KW-0812">Transmembrane</keyword>
<keyword id="KW-1133">Transmembrane helix</keyword>
<keyword id="KW-0833">Ubl conjugation pathway</keyword>
<keyword id="KW-0862">Zinc</keyword>
<keyword id="KW-0863">Zinc-finger</keyword>